<sequence length="3550" mass="392323">METCDSPPISRQENGQSTSKLCGMTQLDNEVPEKVAGIEPDRENSSSHDNLKTDERKSEVLLGFSIENAAATQVTSAKEIPCNECATSFPSLQKYMEHHCPNARLPVLKDDESETSELEDSDVENLTGEIVYQPDGSAYIIEDSKESGQNAQTGANSKLFSTAMFLDSLASAGEKSDQSSTAPVSFYPQIINTFHIASSLGKPFTADPAFPNTSALAGVGPVLHSFRVYDLRHKREKDYLTSDGSAKNSCVSKDVPNNVDLSKFDGCVSDGKRKPVLMCFLCKLSFGYIRSFVTHAVHDHRMTLNDEERRLLSNKCVSAIIQGIGKDKEPLISFLEPKKSTSVYPNFSTTNLIGPDPTFRGLWSAFHVENGDSLQAGFAFLKGSASPSSSAEQPLGITHMPKAEVNLGGLSSLVVNTPITSVSLSHLSSESSKMSESKDQENNCERPKESTILHPNVGCPVKSEPTEPGDEDEEDAYSNELDDEEVLGELTDSIGNKDFPLLNQSISPLSSSVLKFIEKGTSSSSGTIAEDTEKKKQAAATGRSNGNVTNSYSIGGKDFADGSISRDGTTAAPSETTHGDEDSSTTHQHGFTPSTPGTPGPGGDGSPGNGIECPKCDTVLGSSRSLGGHMTMMHSRNSCKTLKCPKCNWHYKYQQTLEAHMKEKHPEPGGSCVYCKTGQPHPRLARGESYTRGYKPFRCEVCNYSTTTKGNLSIHMQSDKHLNNVQNLQNGNGEQVFGHSAPTPNTSLSGCGTPSPSKPKQKPTRRCEVCDYETNVARNLRIHMTSEKHMHNMMLLQQNMKQIQHNLHLGLAPAEAELYQYYLAQNIGLTGMKLENPAETQLLLNPFQFDSATAAALAPGLGELSPYISDPALKLFQCAVCNKFTSDSLEALSVHVNSERSLPEEEWRAVIGDIYQCKLCNYNTQLKANFQLHCKTDKHMQKYQLVAHIKEGGKSNEWRLKCIAIGNPVHLKCNACDYYTNSVDKLRLHTTNHRHEAALKLYKHLQKQEGAVNSESCCYYCAVCDYSSKIKLNLVQHVRSVKHQQTEGLRKLQLHQQGLPSEEDNLSEIFFVKECPANELETASLGARNGEDELIEQQLKAASEEPSEDAGDPLKPPTVAEDDEKEAHKRDNSEGKISTKDPEVIVPEKEPKVVTGATQPLLLAKEDSTGTKRSKPTEDNKFCPEQFYQYPCCNYNSRDQSRIQMHVLSQHSVQPVICCPLCQDVLSNKMHLQLHLTHLHSVSPDCVEKLLMTVPVPDVMMLNSMLLPAAAPEKSEQDPPTALTAEGSGKCSGDGPVDDKSMSGLEDSKVGVEIKNEEQKPAKEPVEASEWNKTSSKDVNISDALQDQLNEQQKRQPLSVSDRHVYKYRCNHCSLAFKTMQKLQIHSQYHAIRAATMCTLCQRSFRTFQALKKHLEAGHPELSEAELQQLYASLPMNGELWAESETMTQDDHGIDQEMEREYEVDHEGKASPVESDGSSIPDDLGLEPKRTLPFRKGPNFTMEKFLDPSRPYKCTVCKESFTQKNILLVHYNSVSHLHKLKKVLQEASSPVPQEANSSTDNKPYKCSTCSVAYSQSSTLEIHMRSVLHQTKARAAKLEPSRHLPSGHSITAAVNSPGQGMLESMSLASVNSKDTHLDAKELNKKQTPELISAQPTHHPPPRSPAQIQMQLQHELQQQAAFFQPQFLNPAFLPHFPMTPEALLQFQQPQFLFPFYIPGAEFSLGPDLGLPTSTTFGVPGMTGMAGSLLEDLKQQIQTQHHVGQTQLQFLQQAQQYQAVQPQLQPQNQQPPLPQQQQPQQQPSKLLKQEQGSLASTDCQLMKDMPSYKEAEEVTEKQEKPKQEFINDTEGLKDSKDIKKQKSLEPCIPPPRIASGARGNAAKALLENFGFELVIQYNENRQKVQKKGKSGEGENSDKLECGICGKLFSNVLILKSHQEHVHGQFFPYGALEKFARQYREAYDKLIQFLLPPLPPAPPQPSTLGPVKIPNTVSAPLQAPPPTPPSAPQQVQLPVSLDLPLFPSIMMQPVQHPALPPQLALQLPQMDTLSADLTQLCQQQLGIDPNFLRHSQFKRPRTRITDDQLKILRAYFDINNSPSEEQIQEMAEKSGLSQKVVKHWFRNTLFKERQRNKDSPYNFSNPPITVLEDIRIDPQPTSLEHYKSDAAFSKRSSRTRFTDYQLRVLQDFFDTNAYPKDDEIEQLSTVLNLPTRVIVVWFQNARQKARKSYENQAEAKDNEKRELTNERYIRTSNMQYQCKKCNVVFPRIFDLITHQKKQCYKDEDDDAQDESQTEDSMDATDQVLYKHCMVSGQTDTAKSTATLVASSGSGTSTPLIPSPKPEPEKNSPKTEYPGEKTKQSDPSLPQGTKSAPSSVLTSSEPQQASIPQPPTQPPKQPQLIGRPPSASQTPIPSSPLQISMTSLQNSLPPQLLQYPCDQCTLAFPTLELWKEHQHMHFLAAQNQFLHSPFLERPMDMPYMIFDPNNPLMTGQLLGSSLTQMPPQTSTAHTTAPASVAASLKRKLEDKEDNNCSEKEGGNSGEDQHRDKRLRTTITPEQLEILYEKYLLDSNPTRKMLDHIAREVGLKKRVVQVWFQNTRARERKGQFRAVGPAQSHKRCPFCRALFKAKSALESHIRSRHWNEGKQAGYSLPPSPLISTEDGGESPQKYIYFDYPSLPLTKIDLSTENELASTVSTPVSKTAELSPKNLLSPSSFKAECPEDVENLNAPSADAGYDQSKTDFDETSSINTAISDATTGDEGAADMENTGGSGEVKPALSPKETKTLDSLQKPATTPTTEVCDDKFLFSLTSPSIHFNDKDGDHDQSFYITDDPDDNADRSETSSIADPSSPNPFGSSNPFKSKSNDRPGHKRFRTQMSNLQLKVLKACFSDYRTPTMQECEMLGNEIGLPKRVVQVWFQNARAKERKFKINIGKPFMINQSGTDGTKPECTLCGVKYSARLSIRDHIFSKQHISKVRETVGSQLDREKDYLAPTTVRQLMAQQELDRIKKASDVLGLTVQQQGITDNCSLHGISLQAAYPGLPGLPPVILPGMNGPSSLPGFPQNSNTLTSPGTGMLGFPSSATSSPALSLSSGPTKSLLQTPPPPPPPPPPPSSLSGQQTEPQNKESEKKQTKPNKVKKIKEEESEAIKPEKHPKKEEKISSALTVLGKVVGETHMDPTQLQALQNAIAGDPASFIGGQFLPYFIPGFASYFSPQLPGTVQGGYLPPICGVESLFPYGPAVPQTLAGLSPGALLQQYQQYQQSLQDSLQKQQKQQQEQQQKPVPAKTAKGEGDQPQSSNEASETKEEKSTAPESTKEEVQLDSKSAEFSDTCIVPFVKYEFVCRKCQMMFTDEDATVNHQKSFCYFGQPLIDPQETVLRIPVSKYQCLACDLALSGNEALSQHLQSSLHKEKTIKQAMRNAKEHVRLLPHSVCSPPPNTSSTSPSAASSNNTYPHLSCFSMKSWPNILFQASARKAASSPSSPPSLSLPSTVTSSLCSTSGVQTSLPTESCSDESDSELSQKLQDLDNSLEVKAKPASGLDGNFNSVRMDMFSV</sequence>
<evidence type="ECO:0000250" key="1">
    <source>
        <dbReference type="UniProtKB" id="Q86UP3"/>
    </source>
</evidence>
<evidence type="ECO:0000255" key="2"/>
<evidence type="ECO:0000255" key="3">
    <source>
        <dbReference type="PROSITE-ProRule" id="PRU00042"/>
    </source>
</evidence>
<evidence type="ECO:0000255" key="4">
    <source>
        <dbReference type="PROSITE-ProRule" id="PRU00108"/>
    </source>
</evidence>
<evidence type="ECO:0000256" key="5">
    <source>
        <dbReference type="SAM" id="MobiDB-lite"/>
    </source>
</evidence>
<evidence type="ECO:0000269" key="6">
    <source>
    </source>
</evidence>
<evidence type="ECO:0000269" key="7">
    <source>
    </source>
</evidence>
<evidence type="ECO:0000305" key="8"/>
<evidence type="ECO:0007829" key="9">
    <source>
        <dbReference type="PDB" id="2YRK"/>
    </source>
</evidence>
<organism>
    <name type="scientific">Mus musculus</name>
    <name type="common">Mouse</name>
    <dbReference type="NCBI Taxonomy" id="10090"/>
    <lineage>
        <taxon>Eukaryota</taxon>
        <taxon>Metazoa</taxon>
        <taxon>Chordata</taxon>
        <taxon>Craniata</taxon>
        <taxon>Vertebrata</taxon>
        <taxon>Euteleostomi</taxon>
        <taxon>Mammalia</taxon>
        <taxon>Eutheria</taxon>
        <taxon>Euarchontoglires</taxon>
        <taxon>Glires</taxon>
        <taxon>Rodentia</taxon>
        <taxon>Myomorpha</taxon>
        <taxon>Muroidea</taxon>
        <taxon>Muridae</taxon>
        <taxon>Murinae</taxon>
        <taxon>Mus</taxon>
        <taxon>Mus</taxon>
    </lineage>
</organism>
<comment type="function">
    <text evidence="7">May play a role in neural and muscle differentiation. May be involved in transcriptional regulation.</text>
</comment>
<comment type="subcellular location">
    <subcellularLocation>
        <location evidence="8">Nucleus</location>
    </subcellularLocation>
</comment>
<comment type="tissue specificity">
    <text evidence="6 7">Expressed in brain, heart, lung, muscle and small intestine. No expression detected in undifferentiated P19 cells, however, expression was seen following retinoic acid treatment to induce neuronal differentiation. Expressed in undifferentiated C2C12 cells, following induction of muscle differentiation in a low-serum medium, expression levels were decreased.</text>
</comment>
<comment type="developmental stage">
    <text>Highly expressed at day 7.</text>
</comment>
<comment type="similarity">
    <text evidence="8">Belongs to the krueppel C2H2-type zinc-finger protein family.</text>
</comment>
<protein>
    <recommendedName>
        <fullName>Zinc finger homeobox protein 4</fullName>
    </recommendedName>
    <alternativeName>
        <fullName>Zinc finger homeodomain protein 4</fullName>
        <shortName>ZFH-4</shortName>
    </alternativeName>
</protein>
<keyword id="KW-0002">3D-structure</keyword>
<keyword id="KW-0007">Acetylation</keyword>
<keyword id="KW-0175">Coiled coil</keyword>
<keyword id="KW-0238">DNA-binding</keyword>
<keyword id="KW-0371">Homeobox</keyword>
<keyword id="KW-1017">Isopeptide bond</keyword>
<keyword id="KW-0479">Metal-binding</keyword>
<keyword id="KW-0539">Nucleus</keyword>
<keyword id="KW-0597">Phosphoprotein</keyword>
<keyword id="KW-1185">Reference proteome</keyword>
<keyword id="KW-0677">Repeat</keyword>
<keyword id="KW-0678">Repressor</keyword>
<keyword id="KW-0804">Transcription</keyword>
<keyword id="KW-0805">Transcription regulation</keyword>
<keyword id="KW-0832">Ubl conjugation</keyword>
<keyword id="KW-0862">Zinc</keyword>
<keyword id="KW-0863">Zinc-finger</keyword>
<gene>
    <name type="primary">Zfhx4</name>
    <name type="synonym">Zfh4</name>
</gene>
<reference key="1">
    <citation type="journal article" date="2000" name="Biochem. Biophys. Res. Commun.">
        <title>The mouse ZFH-4 protein contains four homeodomains and twenty-two zinc fingers.</title>
        <authorList>
            <person name="Sakata N."/>
            <person name="Hemmi K."/>
            <person name="Kawaguchi M."/>
            <person name="Miura Y."/>
            <person name="Noguchi S."/>
            <person name="Ma D."/>
            <person name="Sasahara M."/>
            <person name="Kato T."/>
            <person name="Hori M."/>
            <person name="Tamaoki T."/>
        </authorList>
    </citation>
    <scope>NUCLEOTIDE SEQUENCE [MRNA]</scope>
    <scope>TISSUE SPECIFICITY</scope>
    <source>
        <strain>Swiss Webster / NIH</strain>
    </source>
</reference>
<reference key="2">
    <citation type="journal article" date="2006" name="Biol. Pharm. Bull.">
        <title>A homeodomain-zinc finger protein, ZFHX4, is expressed in neuronal differentiation manner and suppressed in muscle differentiation manner.</title>
        <authorList>
            <person name="Hemmi K."/>
            <person name="Ma D."/>
            <person name="Miura Y."/>
            <person name="Kawaguchi M."/>
            <person name="Sasahara M."/>
            <person name="Hashimoto-Tamaoki T."/>
            <person name="Tamaoki T."/>
            <person name="Sakata N."/>
            <person name="Tsuchiya K."/>
        </authorList>
    </citation>
    <scope>FUNCTION</scope>
    <scope>TISSUE SPECIFICITY</scope>
</reference>
<reference key="3">
    <citation type="submission" date="2007-10" db="PDB data bank">
        <title>Solution structure of the ZF-C2H2 domain in zinc finger homeodomain 4.</title>
        <authorList>
            <consortium name="RIKEN structural genomics initiative (RSGI)"/>
        </authorList>
    </citation>
    <scope>STRUCTURE BY NMR OF 2937-2984</scope>
</reference>
<accession>Q9JJN2</accession>
<feature type="chain" id="PRO_0000278466" description="Zinc finger homeobox protein 4">
    <location>
        <begin position="1"/>
        <end position="3550"/>
    </location>
</feature>
<feature type="zinc finger region" description="C2H2-type 1" evidence="3">
    <location>
        <begin position="611"/>
        <end position="634"/>
    </location>
</feature>
<feature type="zinc finger region" description="C2H2-type 2" evidence="3">
    <location>
        <begin position="642"/>
        <end position="665"/>
    </location>
</feature>
<feature type="zinc finger region" description="C2H2-type 3" evidence="3">
    <location>
        <begin position="697"/>
        <end position="721"/>
    </location>
</feature>
<feature type="zinc finger region" description="C2H2-type 4" evidence="3">
    <location>
        <begin position="765"/>
        <end position="787"/>
    </location>
</feature>
<feature type="zinc finger region" description="C2H2-type 5" evidence="3">
    <location>
        <begin position="915"/>
        <end position="939"/>
    </location>
</feature>
<feature type="zinc finger region" description="C2H2-type 6" evidence="3">
    <location>
        <begin position="971"/>
        <end position="993"/>
    </location>
</feature>
<feature type="zinc finger region" description="C2H2-type 7" evidence="3">
    <location>
        <begin position="1019"/>
        <end position="1043"/>
    </location>
</feature>
<feature type="zinc finger region" description="C2H2-type 8" evidence="3">
    <location>
        <begin position="1188"/>
        <end position="1211"/>
    </location>
</feature>
<feature type="zinc finger region" description="C2H2-type 9" evidence="3">
    <location>
        <begin position="1217"/>
        <end position="1240"/>
    </location>
</feature>
<feature type="zinc finger region" description="C2H2-type 10" evidence="3">
    <location>
        <begin position="1368"/>
        <end position="1390"/>
    </location>
</feature>
<feature type="zinc finger region" description="C2H2-type 11" evidence="3">
    <location>
        <begin position="1396"/>
        <end position="1419"/>
    </location>
</feature>
<feature type="zinc finger region" description="C2H2-type 12" evidence="3">
    <location>
        <begin position="1512"/>
        <end position="1538"/>
    </location>
</feature>
<feature type="zinc finger region" description="C2H2-type 13" evidence="3">
    <location>
        <begin position="1564"/>
        <end position="1588"/>
    </location>
</feature>
<feature type="zinc finger region" description="C2H2-type 14" evidence="3">
    <location>
        <begin position="1916"/>
        <end position="1939"/>
    </location>
</feature>
<feature type="DNA-binding region" description="Homeobox 1" evidence="4">
    <location>
        <begin position="2069"/>
        <end position="2128"/>
    </location>
</feature>
<feature type="DNA-binding region" description="Homeobox 2" evidence="4">
    <location>
        <begin position="2166"/>
        <end position="2225"/>
    </location>
</feature>
<feature type="zinc finger region" description="C2H2-type 15; degenerate" evidence="3">
    <location>
        <begin position="2252"/>
        <end position="2276"/>
    </location>
</feature>
<feature type="zinc finger region" description="C2H2-type 16" evidence="3">
    <location>
        <begin position="2430"/>
        <end position="2452"/>
    </location>
</feature>
<feature type="DNA-binding region" description="Homeobox 3" evidence="4">
    <location>
        <begin position="2542"/>
        <end position="2601"/>
    </location>
</feature>
<feature type="zinc finger region" description="C2H2-type 17" evidence="3">
    <location>
        <begin position="2612"/>
        <end position="2635"/>
    </location>
</feature>
<feature type="DNA-binding region" description="Homeobox 4" evidence="4">
    <location>
        <begin position="2865"/>
        <end position="2924"/>
    </location>
</feature>
<feature type="zinc finger region" description="C2H2-type 18" evidence="3">
    <location>
        <begin position="2943"/>
        <end position="2967"/>
    </location>
</feature>
<feature type="zinc finger region" description="C2H2-type 19; degenerate" evidence="3">
    <location>
        <begin position="3337"/>
        <end position="3361"/>
    </location>
</feature>
<feature type="zinc finger region" description="C2H2-type 20" evidence="3">
    <location>
        <begin position="3381"/>
        <end position="3405"/>
    </location>
</feature>
<feature type="region of interest" description="Disordered" evidence="5">
    <location>
        <begin position="1"/>
        <end position="54"/>
    </location>
</feature>
<feature type="region of interest" description="Disordered" evidence="5">
    <location>
        <begin position="426"/>
        <end position="479"/>
    </location>
</feature>
<feature type="region of interest" description="Disordered" evidence="5">
    <location>
        <begin position="521"/>
        <end position="614"/>
    </location>
</feature>
<feature type="region of interest" description="Disordered" evidence="5">
    <location>
        <begin position="739"/>
        <end position="763"/>
    </location>
</feature>
<feature type="region of interest" description="Disordered" evidence="5">
    <location>
        <begin position="1100"/>
        <end position="1142"/>
    </location>
</feature>
<feature type="region of interest" description="Disordered" evidence="5">
    <location>
        <begin position="1271"/>
        <end position="1339"/>
    </location>
</feature>
<feature type="region of interest" description="Disordered" evidence="5">
    <location>
        <begin position="1467"/>
        <end position="1492"/>
    </location>
</feature>
<feature type="region of interest" description="Disordered" evidence="5">
    <location>
        <begin position="1779"/>
        <end position="1873"/>
    </location>
</feature>
<feature type="region of interest" description="Disordered" evidence="5">
    <location>
        <begin position="1984"/>
        <end position="2006"/>
    </location>
</feature>
<feature type="region of interest" description="Disordered" evidence="5">
    <location>
        <begin position="2318"/>
        <end position="2412"/>
    </location>
</feature>
<feature type="region of interest" description="Disordered" evidence="5">
    <location>
        <begin position="2490"/>
        <end position="2545"/>
    </location>
</feature>
<feature type="region of interest" description="Disordered" evidence="5">
    <location>
        <begin position="2746"/>
        <end position="2791"/>
    </location>
</feature>
<feature type="region of interest" description="Disordered" evidence="5">
    <location>
        <begin position="2810"/>
        <end position="2866"/>
    </location>
</feature>
<feature type="region of interest" description="Disordered" evidence="5">
    <location>
        <begin position="3051"/>
        <end position="3156"/>
    </location>
</feature>
<feature type="region of interest" description="Disordered" evidence="5">
    <location>
        <begin position="3261"/>
        <end position="3318"/>
    </location>
</feature>
<feature type="region of interest" description="Disordered" evidence="5">
    <location>
        <begin position="3424"/>
        <end position="3445"/>
    </location>
</feature>
<feature type="coiled-coil region" evidence="2">
    <location>
        <begin position="3248"/>
        <end position="3277"/>
    </location>
</feature>
<feature type="compositionally biased region" description="Polar residues" evidence="5">
    <location>
        <begin position="9"/>
        <end position="20"/>
    </location>
</feature>
<feature type="compositionally biased region" description="Basic and acidic residues" evidence="5">
    <location>
        <begin position="39"/>
        <end position="54"/>
    </location>
</feature>
<feature type="compositionally biased region" description="Basic and acidic residues" evidence="5">
    <location>
        <begin position="433"/>
        <end position="451"/>
    </location>
</feature>
<feature type="compositionally biased region" description="Acidic residues" evidence="5">
    <location>
        <begin position="467"/>
        <end position="479"/>
    </location>
</feature>
<feature type="compositionally biased region" description="Polar residues" evidence="5">
    <location>
        <begin position="542"/>
        <end position="553"/>
    </location>
</feature>
<feature type="compositionally biased region" description="Polar residues" evidence="5">
    <location>
        <begin position="566"/>
        <end position="576"/>
    </location>
</feature>
<feature type="compositionally biased region" description="Polar residues" evidence="5">
    <location>
        <begin position="742"/>
        <end position="752"/>
    </location>
</feature>
<feature type="compositionally biased region" description="Basic and acidic residues" evidence="5">
    <location>
        <begin position="1125"/>
        <end position="1142"/>
    </location>
</feature>
<feature type="compositionally biased region" description="Basic and acidic residues" evidence="5">
    <location>
        <begin position="1297"/>
        <end position="1326"/>
    </location>
</feature>
<feature type="compositionally biased region" description="Low complexity" evidence="5">
    <location>
        <begin position="1792"/>
        <end position="1808"/>
    </location>
</feature>
<feature type="compositionally biased region" description="Basic and acidic residues" evidence="5">
    <location>
        <begin position="1823"/>
        <end position="1860"/>
    </location>
</feature>
<feature type="compositionally biased region" description="Pro residues" evidence="5">
    <location>
        <begin position="1994"/>
        <end position="2003"/>
    </location>
</feature>
<feature type="compositionally biased region" description="Polar residues" evidence="5">
    <location>
        <begin position="2318"/>
        <end position="2331"/>
    </location>
</feature>
<feature type="compositionally biased region" description="Basic and acidic residues" evidence="5">
    <location>
        <begin position="2337"/>
        <end position="2355"/>
    </location>
</feature>
<feature type="compositionally biased region" description="Polar residues" evidence="5">
    <location>
        <begin position="2356"/>
        <end position="2376"/>
    </location>
</feature>
<feature type="compositionally biased region" description="Pro residues" evidence="5">
    <location>
        <begin position="2383"/>
        <end position="2392"/>
    </location>
</feature>
<feature type="compositionally biased region" description="Polar residues" evidence="5">
    <location>
        <begin position="2401"/>
        <end position="2412"/>
    </location>
</feature>
<feature type="compositionally biased region" description="Polar residues" evidence="5">
    <location>
        <begin position="2490"/>
        <end position="2508"/>
    </location>
</feature>
<feature type="compositionally biased region" description="Basic and acidic residues" evidence="5">
    <location>
        <begin position="2517"/>
        <end position="2541"/>
    </location>
</feature>
<feature type="compositionally biased region" description="Polar residues" evidence="5">
    <location>
        <begin position="2781"/>
        <end position="2791"/>
    </location>
</feature>
<feature type="compositionally biased region" description="Basic and acidic residues" evidence="5">
    <location>
        <begin position="2811"/>
        <end position="2820"/>
    </location>
</feature>
<feature type="compositionally biased region" description="Low complexity" evidence="5">
    <location>
        <begin position="2843"/>
        <end position="2855"/>
    </location>
</feature>
<feature type="compositionally biased region" description="Polar residues" evidence="5">
    <location>
        <begin position="3058"/>
        <end position="3068"/>
    </location>
</feature>
<feature type="compositionally biased region" description="Low complexity" evidence="5">
    <location>
        <begin position="3075"/>
        <end position="3088"/>
    </location>
</feature>
<feature type="compositionally biased region" description="Pro residues" evidence="5">
    <location>
        <begin position="3097"/>
        <end position="3109"/>
    </location>
</feature>
<feature type="compositionally biased region" description="Basic and acidic residues" evidence="5">
    <location>
        <begin position="3136"/>
        <end position="3156"/>
    </location>
</feature>
<feature type="compositionally biased region" description="Low complexity" evidence="5">
    <location>
        <begin position="3261"/>
        <end position="3276"/>
    </location>
</feature>
<feature type="compositionally biased region" description="Basic and acidic residues" evidence="5">
    <location>
        <begin position="3298"/>
        <end position="3318"/>
    </location>
</feature>
<feature type="compositionally biased region" description="Low complexity" evidence="5">
    <location>
        <begin position="3435"/>
        <end position="3445"/>
    </location>
</feature>
<feature type="modified residue" description="N-acetylmethionine" evidence="1">
    <location>
        <position position="1"/>
    </location>
</feature>
<feature type="modified residue" description="Phosphoserine" evidence="1">
    <location>
        <position position="2645"/>
    </location>
</feature>
<feature type="cross-link" description="Glycyl lysine isopeptide (Lys-Gly) (interchain with G-Cter in SUMO2)" evidence="1">
    <location>
        <position position="1165"/>
    </location>
</feature>
<feature type="cross-link" description="Glycyl lysine isopeptide (Lys-Gly) (interchain with G-Cter in SUMO2)" evidence="1">
    <location>
        <position position="1315"/>
    </location>
</feature>
<feature type="cross-link" description="Glycyl lysine isopeptide (Lys-Gly) (interchain with G-Cter in SUMO2)" evidence="1">
    <location>
        <position position="1562"/>
    </location>
</feature>
<feature type="cross-link" description="Glycyl lysine isopeptide (Lys-Gly) (interchain with G-Cter in SUMO2)" evidence="1">
    <location>
        <position position="1805"/>
    </location>
</feature>
<feature type="cross-link" description="Glycyl lysine isopeptide (Lys-Gly) (interchain with G-Cter in SUMO2)" evidence="1">
    <location>
        <position position="3137"/>
    </location>
</feature>
<feature type="turn" evidence="9">
    <location>
        <begin position="2946"/>
        <end position="2948"/>
    </location>
</feature>
<feature type="strand" evidence="9">
    <location>
        <begin position="2954"/>
        <end position="2956"/>
    </location>
</feature>
<feature type="helix" evidence="9">
    <location>
        <begin position="2958"/>
        <end position="2962"/>
    </location>
</feature>
<feature type="helix" evidence="9">
    <location>
        <begin position="2965"/>
        <end position="2973"/>
    </location>
</feature>
<name>ZFHX4_MOUSE</name>
<dbReference type="EMBL" id="AB024499">
    <property type="protein sequence ID" value="BAB03600.1"/>
    <property type="molecule type" value="mRNA"/>
</dbReference>
<dbReference type="PDB" id="2YRK">
    <property type="method" value="NMR"/>
    <property type="chains" value="A=2937-2984"/>
</dbReference>
<dbReference type="PDBsum" id="2YRK"/>
<dbReference type="SMR" id="Q9JJN2"/>
<dbReference type="FunCoup" id="Q9JJN2">
    <property type="interactions" value="1269"/>
</dbReference>
<dbReference type="IntAct" id="Q9JJN2">
    <property type="interactions" value="1"/>
</dbReference>
<dbReference type="MINT" id="Q9JJN2"/>
<dbReference type="STRING" id="10090.ENSMUSP00000026284"/>
<dbReference type="GlyGen" id="Q9JJN2">
    <property type="glycosylation" value="3 sites"/>
</dbReference>
<dbReference type="iPTMnet" id="Q9JJN2"/>
<dbReference type="PhosphoSitePlus" id="Q9JJN2"/>
<dbReference type="PaxDb" id="10090-ENSMUSP00000135827"/>
<dbReference type="PeptideAtlas" id="Q9JJN2"/>
<dbReference type="ProteomicsDB" id="275349"/>
<dbReference type="Pumba" id="Q9JJN2"/>
<dbReference type="AGR" id="MGI:2137668"/>
<dbReference type="MGI" id="MGI:2137668">
    <property type="gene designation" value="Zfhx4"/>
</dbReference>
<dbReference type="eggNOG" id="KOG1146">
    <property type="taxonomic scope" value="Eukaryota"/>
</dbReference>
<dbReference type="InParanoid" id="Q9JJN2"/>
<dbReference type="PhylomeDB" id="Q9JJN2"/>
<dbReference type="ChiTaRS" id="Zfhx4">
    <property type="organism name" value="mouse"/>
</dbReference>
<dbReference type="EvolutionaryTrace" id="Q9JJN2"/>
<dbReference type="PRO" id="PR:Q9JJN2"/>
<dbReference type="Proteomes" id="UP000000589">
    <property type="component" value="Unplaced"/>
</dbReference>
<dbReference type="RNAct" id="Q9JJN2">
    <property type="molecule type" value="protein"/>
</dbReference>
<dbReference type="GO" id="GO:0005634">
    <property type="term" value="C:nucleus"/>
    <property type="evidence" value="ECO:0000314"/>
    <property type="project" value="MGI"/>
</dbReference>
<dbReference type="GO" id="GO:0003677">
    <property type="term" value="F:DNA binding"/>
    <property type="evidence" value="ECO:0007669"/>
    <property type="project" value="UniProtKB-KW"/>
</dbReference>
<dbReference type="GO" id="GO:0000981">
    <property type="term" value="F:DNA-binding transcription factor activity, RNA polymerase II-specific"/>
    <property type="evidence" value="ECO:0007669"/>
    <property type="project" value="InterPro"/>
</dbReference>
<dbReference type="GO" id="GO:0008270">
    <property type="term" value="F:zinc ion binding"/>
    <property type="evidence" value="ECO:0007669"/>
    <property type="project" value="UniProtKB-KW"/>
</dbReference>
<dbReference type="CDD" id="cd00086">
    <property type="entry name" value="homeodomain"/>
    <property type="match status" value="4"/>
</dbReference>
<dbReference type="FunFam" id="1.10.10.60:FF:000082">
    <property type="entry name" value="Putative zinc finger homeobox protein 4"/>
    <property type="match status" value="1"/>
</dbReference>
<dbReference type="FunFam" id="3.30.160.60:FF:000429">
    <property type="entry name" value="Zinc finger homeobox protein 3"/>
    <property type="match status" value="1"/>
</dbReference>
<dbReference type="FunFam" id="3.30.160.60:FF:000317">
    <property type="entry name" value="zinc finger homeobox protein 3"/>
    <property type="match status" value="1"/>
</dbReference>
<dbReference type="FunFam" id="1.10.10.60:FF:000064">
    <property type="entry name" value="Zinc finger homeobox protein 4"/>
    <property type="match status" value="1"/>
</dbReference>
<dbReference type="FunFam" id="1.10.10.60:FF:000096">
    <property type="entry name" value="Zinc finger homeobox protein 4"/>
    <property type="match status" value="1"/>
</dbReference>
<dbReference type="FunFam" id="3.30.160.60:FF:000081">
    <property type="entry name" value="Zinc finger homeobox protein 4"/>
    <property type="match status" value="1"/>
</dbReference>
<dbReference type="FunFam" id="3.30.160.60:FF:001440">
    <property type="entry name" value="Zinc finger homeobox protein 4"/>
    <property type="match status" value="1"/>
</dbReference>
<dbReference type="FunFam" id="1.10.10.60:FF:000058">
    <property type="entry name" value="zinc finger homeobox protein 4"/>
    <property type="match status" value="1"/>
</dbReference>
<dbReference type="FunFam" id="3.30.160.60:FF:000446">
    <property type="entry name" value="Zinc finger protein"/>
    <property type="match status" value="1"/>
</dbReference>
<dbReference type="Gene3D" id="3.30.160.60">
    <property type="entry name" value="Classic Zinc Finger"/>
    <property type="match status" value="4"/>
</dbReference>
<dbReference type="Gene3D" id="1.10.10.60">
    <property type="entry name" value="Homeodomain-like"/>
    <property type="match status" value="4"/>
</dbReference>
<dbReference type="InterPro" id="IPR001356">
    <property type="entry name" value="HD"/>
</dbReference>
<dbReference type="InterPro" id="IPR017970">
    <property type="entry name" value="Homeobox_CS"/>
</dbReference>
<dbReference type="InterPro" id="IPR009057">
    <property type="entry name" value="Homeodomain-like_sf"/>
</dbReference>
<dbReference type="InterPro" id="IPR003604">
    <property type="entry name" value="Matrin/U1-like-C_Znf_C2H2"/>
</dbReference>
<dbReference type="InterPro" id="IPR036236">
    <property type="entry name" value="Znf_C2H2_sf"/>
</dbReference>
<dbReference type="InterPro" id="IPR013087">
    <property type="entry name" value="Znf_C2H2_type"/>
</dbReference>
<dbReference type="InterPro" id="IPR051968">
    <property type="entry name" value="ZnFinger_Homeobox_TR"/>
</dbReference>
<dbReference type="PANTHER" id="PTHR45891">
    <property type="entry name" value="ZINC FINGER HOMEOBOX PROTEIN"/>
    <property type="match status" value="1"/>
</dbReference>
<dbReference type="PANTHER" id="PTHR45891:SF2">
    <property type="entry name" value="ZINC FINGER HOMEOBOX PROTEIN 4"/>
    <property type="match status" value="1"/>
</dbReference>
<dbReference type="Pfam" id="PF00046">
    <property type="entry name" value="Homeodomain"/>
    <property type="match status" value="4"/>
</dbReference>
<dbReference type="Pfam" id="PF00096">
    <property type="entry name" value="zf-C2H2"/>
    <property type="match status" value="2"/>
</dbReference>
<dbReference type="Pfam" id="PF24056">
    <property type="entry name" value="zf-C2H2_ZFHX3"/>
    <property type="match status" value="1"/>
</dbReference>
<dbReference type="SMART" id="SM00389">
    <property type="entry name" value="HOX"/>
    <property type="match status" value="4"/>
</dbReference>
<dbReference type="SMART" id="SM00355">
    <property type="entry name" value="ZnF_C2H2"/>
    <property type="match status" value="23"/>
</dbReference>
<dbReference type="SMART" id="SM00451">
    <property type="entry name" value="ZnF_U1"/>
    <property type="match status" value="7"/>
</dbReference>
<dbReference type="SUPFAM" id="SSF57667">
    <property type="entry name" value="beta-beta-alpha zinc fingers"/>
    <property type="match status" value="5"/>
</dbReference>
<dbReference type="SUPFAM" id="SSF46689">
    <property type="entry name" value="Homeodomain-like"/>
    <property type="match status" value="4"/>
</dbReference>
<dbReference type="PROSITE" id="PS00027">
    <property type="entry name" value="HOMEOBOX_1"/>
    <property type="match status" value="2"/>
</dbReference>
<dbReference type="PROSITE" id="PS50071">
    <property type="entry name" value="HOMEOBOX_2"/>
    <property type="match status" value="4"/>
</dbReference>
<dbReference type="PROSITE" id="PS00028">
    <property type="entry name" value="ZINC_FINGER_C2H2_1"/>
    <property type="match status" value="13"/>
</dbReference>
<dbReference type="PROSITE" id="PS50157">
    <property type="entry name" value="ZINC_FINGER_C2H2_2"/>
    <property type="match status" value="6"/>
</dbReference>
<proteinExistence type="evidence at protein level"/>